<organism>
    <name type="scientific">Aspergillus flavus (strain ATCC 200026 / FGSC A1120 / IAM 13836 / NRRL 3357 / JCM 12722 / SRRC 167)</name>
    <dbReference type="NCBI Taxonomy" id="332952"/>
    <lineage>
        <taxon>Eukaryota</taxon>
        <taxon>Fungi</taxon>
        <taxon>Dikarya</taxon>
        <taxon>Ascomycota</taxon>
        <taxon>Pezizomycotina</taxon>
        <taxon>Eurotiomycetes</taxon>
        <taxon>Eurotiomycetidae</taxon>
        <taxon>Eurotiales</taxon>
        <taxon>Aspergillaceae</taxon>
        <taxon>Aspergillus</taxon>
        <taxon>Aspergillus subgen. Circumdati</taxon>
    </lineage>
</organism>
<keyword id="KW-0521">NADP</keyword>
<keyword id="KW-0560">Oxidoreductase</keyword>
<dbReference type="EC" id="1.1.1.-"/>
<dbReference type="EMBL" id="U32377">
    <property type="protein sequence ID" value="AAC49167.1"/>
    <property type="molecule type" value="Genomic_DNA"/>
</dbReference>
<dbReference type="EMBL" id="EQ963478">
    <property type="protein sequence ID" value="EED51166.1"/>
    <property type="molecule type" value="Genomic_DNA"/>
</dbReference>
<dbReference type="RefSeq" id="XP_002379942.1">
    <property type="nucleotide sequence ID" value="XM_002379901.1"/>
</dbReference>
<dbReference type="SMR" id="Q00049"/>
<dbReference type="STRING" id="332952.Q00049"/>
<dbReference type="EnsemblFungi" id="EED51166">
    <property type="protein sequence ID" value="EED51166"/>
    <property type="gene ID" value="AFLA_139310"/>
</dbReference>
<dbReference type="VEuPathDB" id="FungiDB:AFLA_006301"/>
<dbReference type="eggNOG" id="KOG1575">
    <property type="taxonomic scope" value="Eukaryota"/>
</dbReference>
<dbReference type="OMA" id="HIELYQM"/>
<dbReference type="UniPathway" id="UPA00287"/>
<dbReference type="PHI-base" id="PHI:7768"/>
<dbReference type="GO" id="GO:0016491">
    <property type="term" value="F:oxidoreductase activity"/>
    <property type="evidence" value="ECO:0007669"/>
    <property type="project" value="UniProtKB-KW"/>
</dbReference>
<dbReference type="GO" id="GO:0045122">
    <property type="term" value="P:aflatoxin biosynthetic process"/>
    <property type="evidence" value="ECO:0007669"/>
    <property type="project" value="UniProtKB-UniPathway"/>
</dbReference>
<dbReference type="CDD" id="cd19146">
    <property type="entry name" value="AKR_AKR9A1-2"/>
    <property type="match status" value="1"/>
</dbReference>
<dbReference type="FunFam" id="3.20.20.100:FF:000086">
    <property type="entry name" value="Putative sterigmatocystin biosynthesis dehydrogenase stcV"/>
    <property type="match status" value="1"/>
</dbReference>
<dbReference type="Gene3D" id="3.20.20.100">
    <property type="entry name" value="NADP-dependent oxidoreductase domain"/>
    <property type="match status" value="1"/>
</dbReference>
<dbReference type="InterPro" id="IPR050523">
    <property type="entry name" value="AKR_Detox_Biosynth"/>
</dbReference>
<dbReference type="InterPro" id="IPR023210">
    <property type="entry name" value="NADP_OxRdtase_dom"/>
</dbReference>
<dbReference type="InterPro" id="IPR036812">
    <property type="entry name" value="NADP_OxRdtase_dom_sf"/>
</dbReference>
<dbReference type="PANTHER" id="PTHR43364">
    <property type="entry name" value="NADH-SPECIFIC METHYLGLYOXAL REDUCTASE-RELATED"/>
    <property type="match status" value="1"/>
</dbReference>
<dbReference type="PANTHER" id="PTHR43364:SF7">
    <property type="entry name" value="NADP-DEPENDENT OXIDOREDUCTASE DOMAIN-CONTAINING PROTEIN-RELATED"/>
    <property type="match status" value="1"/>
</dbReference>
<dbReference type="Pfam" id="PF00248">
    <property type="entry name" value="Aldo_ket_red"/>
    <property type="match status" value="1"/>
</dbReference>
<dbReference type="SUPFAM" id="SSF51430">
    <property type="entry name" value="NAD(P)-linked oxidoreductase"/>
    <property type="match status" value="1"/>
</dbReference>
<protein>
    <recommendedName>
        <fullName>Norsolorinic acid reductase</fullName>
        <ecNumber>1.1.1.-</ecNumber>
    </recommendedName>
</protein>
<accession>Q00049</accession>
<accession>B8NHZ5</accession>
<evidence type="ECO:0000250" key="1"/>
<evidence type="ECO:0000305" key="2"/>
<proteinExistence type="inferred from homology"/>
<comment type="pathway">
    <text>Mycotoxin biosynthesis; aflatoxin biosynthesis.</text>
</comment>
<comment type="similarity">
    <text evidence="2">Belongs to the aldo/keto reductase family. Aldo/keto reductase 2 subfamily.</text>
</comment>
<name>NORA_ASPFN</name>
<reference key="1">
    <citation type="journal article" date="1996" name="Appl. Environ. Microbiol.">
        <title>Molecular characterization of an Aspergillus parasiticus dehydrogenase gene, norA, located on the aflatoxin biosynthesis gene cluster.</title>
        <authorList>
            <person name="Cary J.W."/>
            <person name="Wright M."/>
            <person name="Bhatnagar D."/>
            <person name="Lee R."/>
            <person name="Chu F."/>
        </authorList>
    </citation>
    <scope>NUCLEOTIDE SEQUENCE [GENOMIC DNA]</scope>
    <source>
        <strain>ATCC 200026 / FGSC A1120 / IAM 13836 / NRRL 3357 / JCM 12722 / SRRC 167</strain>
    </source>
</reference>
<reference key="2">
    <citation type="journal article" date="2015" name="Genome Announc.">
        <title>Genome sequence of Aspergillus flavus NRRL 3357, a strain that causes aflatoxin contamination of food and feed.</title>
        <authorList>
            <person name="Nierman W.C."/>
            <person name="Yu J."/>
            <person name="Fedorova-Abrams N.D."/>
            <person name="Losada L."/>
            <person name="Cleveland T.E."/>
            <person name="Bhatnagar D."/>
            <person name="Bennett J.W."/>
            <person name="Dean R."/>
            <person name="Payne G.A."/>
        </authorList>
    </citation>
    <scope>NUCLEOTIDE SEQUENCE [LARGE SCALE GENOMIC DNA]</scope>
    <source>
        <strain>ATCC 200026 / FGSC A1120 / IAM 13836 / NRRL 3357 / JCM 12722 / SRRC 167</strain>
    </source>
</reference>
<sequence>MVLPTAPEPPTLLGYHRILSSSAGVRVSPLCLGTMSFGNGWKGVMGECDQATSFNMLDTFYESGGNFIDVANFYQGGDSERWVGEWMAQRQNRDEIVLSTKYTMGYTMFGPQKIKSNYQGNHTKSLRLSVKASLQKLQTDYIDLLYVHMWDFTTSVEEVMRSLNHLVANGKVLYLGVSDTPAWLVVKCNAFARANGLTPFSVYQGHWSCAFRDFERDILPMCESEGMGLAPWGVLGRGQFRSAEDFSREGRKMGPQDEKHRRLGEKLDQMAQQKNTKATSIAQAYVMHKAPYVFPVIGGRKVEHLKENIEALGLVLSEEEIREIDDAEPFDVGFPMNFLFETPTQSYRTNMTSKDIWQLSCNTRLETVPKQQPIEPFQGAKYFGSASK</sequence>
<feature type="chain" id="PRO_0000070383" description="Norsolorinic acid reductase">
    <location>
        <begin position="1"/>
        <end position="388"/>
    </location>
</feature>
<feature type="active site" description="Proton donor" evidence="1">
    <location>
        <position position="74"/>
    </location>
</feature>
<feature type="binding site" evidence="1">
    <location>
        <begin position="233"/>
        <end position="243"/>
    </location>
    <ligand>
        <name>NADP(+)</name>
        <dbReference type="ChEBI" id="CHEBI:58349"/>
    </ligand>
</feature>
<feature type="sequence conflict" description="In Ref. 1; AAC49167." ref="1">
    <original>S</original>
    <variation>T</variation>
    <location>
        <position position="79"/>
    </location>
</feature>
<feature type="sequence conflict" description="In Ref. 1; AAC49167." ref="1">
    <original>T</original>
    <variation>A</variation>
    <location>
        <position position="123"/>
    </location>
</feature>
<feature type="sequence conflict" description="In Ref. 1; AAC49167." ref="1">
    <original>D</original>
    <variation>E</variation>
    <location>
        <position position="245"/>
    </location>
</feature>
<feature type="sequence conflict" description="In Ref. 1; AAC49167." ref="1">
    <original>L</original>
    <variation>S</variation>
    <location>
        <position position="339"/>
    </location>
</feature>
<gene>
    <name type="primary">norA</name>
    <name type="synonym">aad</name>
    <name type="synonym">adh-2</name>
    <name type="synonym">AflE</name>
    <name type="ORF">AFLA_139310</name>
</gene>